<name>GCY4_CAEBR</name>
<evidence type="ECO:0000250" key="1">
    <source>
        <dbReference type="UniProtKB" id="Q19187"/>
    </source>
</evidence>
<evidence type="ECO:0000250" key="2">
    <source>
        <dbReference type="UniProtKB" id="Q23681"/>
    </source>
</evidence>
<evidence type="ECO:0000255" key="3"/>
<evidence type="ECO:0000255" key="4">
    <source>
        <dbReference type="PROSITE-ProRule" id="PRU00099"/>
    </source>
</evidence>
<evidence type="ECO:0000255" key="5">
    <source>
        <dbReference type="PROSITE-ProRule" id="PRU00159"/>
    </source>
</evidence>
<evidence type="ECO:0000255" key="6">
    <source>
        <dbReference type="PROSITE-ProRule" id="PRU00498"/>
    </source>
</evidence>
<evidence type="ECO:0000256" key="7">
    <source>
        <dbReference type="SAM" id="MobiDB-lite"/>
    </source>
</evidence>
<evidence type="ECO:0000269" key="8">
    <source>
    </source>
</evidence>
<evidence type="ECO:0000305" key="9"/>
<evidence type="ECO:0000312" key="10">
    <source>
        <dbReference type="EMBL" id="CAP22376.2"/>
    </source>
</evidence>
<evidence type="ECO:0000312" key="11">
    <source>
        <dbReference type="Proteomes" id="UP000008549"/>
    </source>
</evidence>
<evidence type="ECO:0000312" key="12">
    <source>
        <dbReference type="WormBase" id="CBG00851a"/>
    </source>
</evidence>
<keyword id="KW-1003">Cell membrane</keyword>
<keyword id="KW-0141">cGMP biosynthesis</keyword>
<keyword id="KW-0145">Chemotaxis</keyword>
<keyword id="KW-0325">Glycoprotein</keyword>
<keyword id="KW-0342">GTP-binding</keyword>
<keyword id="KW-0456">Lyase</keyword>
<keyword id="KW-0472">Membrane</keyword>
<keyword id="KW-0547">Nucleotide-binding</keyword>
<keyword id="KW-0675">Receptor</keyword>
<keyword id="KW-1185">Reference proteome</keyword>
<keyword id="KW-0732">Signal</keyword>
<keyword id="KW-0812">Transmembrane</keyword>
<keyword id="KW-1133">Transmembrane helix</keyword>
<comment type="function">
    <text evidence="1 2">Guanylate cyclase involved in the production of the second messenger cGMP. Regulates chemotaxis responses toward salt ions in ASE sensory neurons (By similarity).</text>
</comment>
<comment type="catalytic activity">
    <reaction evidence="1">
        <text>GTP = 3',5'-cyclic GMP + diphosphate</text>
        <dbReference type="Rhea" id="RHEA:13665"/>
        <dbReference type="ChEBI" id="CHEBI:33019"/>
        <dbReference type="ChEBI" id="CHEBI:37565"/>
        <dbReference type="ChEBI" id="CHEBI:57746"/>
        <dbReference type="EC" id="4.6.1.2"/>
    </reaction>
</comment>
<comment type="subcellular location">
    <subcellularLocation>
        <location evidence="9">Cell membrane</location>
        <topology evidence="9">Single-pass type I membrane protein</topology>
    </subcellularLocation>
</comment>
<comment type="tissue specificity">
    <text evidence="8">Expressed bilaterally in ASE neurons.</text>
</comment>
<comment type="domain">
    <text evidence="5">The protein kinase domain is predicted to be catalytically inactive.</text>
</comment>
<comment type="similarity">
    <text evidence="4">Belongs to the adenylyl cyclase class-4/guanylyl cyclase family.</text>
</comment>
<proteinExistence type="evidence at transcript level"/>
<accession>A8WPG9</accession>
<gene>
    <name evidence="12" type="primary">gcy-4</name>
    <name evidence="12" type="ORF">CBG00851</name>
</gene>
<feature type="signal peptide" evidence="3">
    <location>
        <begin position="1"/>
        <end position="20"/>
    </location>
</feature>
<feature type="chain" id="PRO_0000433272" description="Receptor-type guanylate cyclase gcy-4" evidence="3">
    <location>
        <begin position="21"/>
        <end position="1135"/>
    </location>
</feature>
<feature type="topological domain" description="Extracellular" evidence="3">
    <location>
        <begin position="21"/>
        <end position="483"/>
    </location>
</feature>
<feature type="transmembrane region" description="Helical" evidence="3">
    <location>
        <begin position="484"/>
        <end position="504"/>
    </location>
</feature>
<feature type="topological domain" description="Cytoplasmic" evidence="3">
    <location>
        <begin position="505"/>
        <end position="1135"/>
    </location>
</feature>
<feature type="domain" description="Protein kinase" evidence="5">
    <location>
        <begin position="545"/>
        <end position="837"/>
    </location>
</feature>
<feature type="domain" description="Guanylate cyclase" evidence="4">
    <location>
        <begin position="895"/>
        <end position="1025"/>
    </location>
</feature>
<feature type="region of interest" description="Disordered" evidence="7">
    <location>
        <begin position="535"/>
        <end position="560"/>
    </location>
</feature>
<feature type="compositionally biased region" description="Low complexity" evidence="7">
    <location>
        <begin position="546"/>
        <end position="560"/>
    </location>
</feature>
<feature type="glycosylation site" description="N-linked (GlcNAc...) asparagine" evidence="6">
    <location>
        <position position="37"/>
    </location>
</feature>
<feature type="glycosylation site" description="N-linked (GlcNAc...) asparagine" evidence="6">
    <location>
        <position position="193"/>
    </location>
</feature>
<feature type="glycosylation site" description="N-linked (GlcNAc...) asparagine" evidence="6">
    <location>
        <position position="209"/>
    </location>
</feature>
<feature type="glycosylation site" description="N-linked (GlcNAc...) asparagine" evidence="6">
    <location>
        <position position="251"/>
    </location>
</feature>
<feature type="glycosylation site" description="N-linked (GlcNAc...) asparagine" evidence="6">
    <location>
        <position position="349"/>
    </location>
</feature>
<feature type="glycosylation site" description="N-linked (GlcNAc...) asparagine" evidence="6">
    <location>
        <position position="375"/>
    </location>
</feature>
<feature type="glycosylation site" description="N-linked (GlcNAc...) asparagine" evidence="6">
    <location>
        <position position="431"/>
    </location>
</feature>
<feature type="glycosylation site" description="N-linked (GlcNAc...) asparagine" evidence="6">
    <location>
        <position position="436"/>
    </location>
</feature>
<feature type="glycosylation site" description="N-linked (GlcNAc...) asparagine" evidence="6">
    <location>
        <position position="447"/>
    </location>
</feature>
<organism evidence="11">
    <name type="scientific">Caenorhabditis briggsae</name>
    <dbReference type="NCBI Taxonomy" id="6238"/>
    <lineage>
        <taxon>Eukaryota</taxon>
        <taxon>Metazoa</taxon>
        <taxon>Ecdysozoa</taxon>
        <taxon>Nematoda</taxon>
        <taxon>Chromadorea</taxon>
        <taxon>Rhabditida</taxon>
        <taxon>Rhabditina</taxon>
        <taxon>Rhabditomorpha</taxon>
        <taxon>Rhabditoidea</taxon>
        <taxon>Rhabditidae</taxon>
        <taxon>Peloderinae</taxon>
        <taxon>Caenorhabditis</taxon>
    </lineage>
</organism>
<protein>
    <recommendedName>
        <fullName evidence="9">Receptor-type guanylate cyclase gcy-4</fullName>
        <ecNumber evidence="1">4.6.1.2</ecNumber>
    </recommendedName>
</protein>
<dbReference type="EC" id="4.6.1.2" evidence="1"/>
<dbReference type="EMBL" id="HE600951">
    <property type="protein sequence ID" value="CAP22376.2"/>
    <property type="molecule type" value="Genomic_DNA"/>
</dbReference>
<dbReference type="SMR" id="A8WPG9"/>
<dbReference type="FunCoup" id="A8WPG9">
    <property type="interactions" value="89"/>
</dbReference>
<dbReference type="STRING" id="6238.A8WPG9"/>
<dbReference type="GlyCosmos" id="A8WPG9">
    <property type="glycosylation" value="9 sites, No reported glycans"/>
</dbReference>
<dbReference type="EnsemblMetazoa" id="CBG00851b.1">
    <property type="protein sequence ID" value="CBG00851b.1"/>
    <property type="gene ID" value="WBGene00024180"/>
</dbReference>
<dbReference type="WormBase" id="CBG00851a">
    <property type="protein sequence ID" value="CBP43164"/>
    <property type="gene ID" value="WBGene00024180"/>
    <property type="gene designation" value="Cbr-gcy-4"/>
</dbReference>
<dbReference type="eggNOG" id="KOG1023">
    <property type="taxonomic scope" value="Eukaryota"/>
</dbReference>
<dbReference type="HOGENOM" id="CLU_001072_1_3_1"/>
<dbReference type="InParanoid" id="A8WPG9"/>
<dbReference type="OMA" id="FYMYGMA"/>
<dbReference type="Proteomes" id="UP000008549">
    <property type="component" value="Unassembled WGS sequence"/>
</dbReference>
<dbReference type="GO" id="GO:0005886">
    <property type="term" value="C:plasma membrane"/>
    <property type="evidence" value="ECO:0000318"/>
    <property type="project" value="GO_Central"/>
</dbReference>
<dbReference type="GO" id="GO:0005524">
    <property type="term" value="F:ATP binding"/>
    <property type="evidence" value="ECO:0007669"/>
    <property type="project" value="InterPro"/>
</dbReference>
<dbReference type="GO" id="GO:0005525">
    <property type="term" value="F:GTP binding"/>
    <property type="evidence" value="ECO:0007669"/>
    <property type="project" value="UniProtKB-KW"/>
</dbReference>
<dbReference type="GO" id="GO:0004383">
    <property type="term" value="F:guanylate cyclase activity"/>
    <property type="evidence" value="ECO:0000318"/>
    <property type="project" value="GO_Central"/>
</dbReference>
<dbReference type="GO" id="GO:0001653">
    <property type="term" value="F:peptide receptor activity"/>
    <property type="evidence" value="ECO:0000318"/>
    <property type="project" value="GO_Central"/>
</dbReference>
<dbReference type="GO" id="GO:0004672">
    <property type="term" value="F:protein kinase activity"/>
    <property type="evidence" value="ECO:0007669"/>
    <property type="project" value="InterPro"/>
</dbReference>
<dbReference type="GO" id="GO:0006182">
    <property type="term" value="P:cGMP biosynthetic process"/>
    <property type="evidence" value="ECO:0000318"/>
    <property type="project" value="GO_Central"/>
</dbReference>
<dbReference type="GO" id="GO:0007635">
    <property type="term" value="P:chemosensory behavior"/>
    <property type="evidence" value="ECO:0007669"/>
    <property type="project" value="EnsemblMetazoa"/>
</dbReference>
<dbReference type="GO" id="GO:0006935">
    <property type="term" value="P:chemotaxis"/>
    <property type="evidence" value="ECO:0007669"/>
    <property type="project" value="UniProtKB-KW"/>
</dbReference>
<dbReference type="GO" id="GO:0035556">
    <property type="term" value="P:intracellular signal transduction"/>
    <property type="evidence" value="ECO:0007669"/>
    <property type="project" value="InterPro"/>
</dbReference>
<dbReference type="GO" id="GO:0007168">
    <property type="term" value="P:receptor guanylyl cyclase signaling pathway"/>
    <property type="evidence" value="ECO:0000318"/>
    <property type="project" value="GO_Central"/>
</dbReference>
<dbReference type="GO" id="GO:1902074">
    <property type="term" value="P:response to salt"/>
    <property type="evidence" value="ECO:0007669"/>
    <property type="project" value="EnsemblMetazoa"/>
</dbReference>
<dbReference type="CDD" id="cd07302">
    <property type="entry name" value="CHD"/>
    <property type="match status" value="1"/>
</dbReference>
<dbReference type="CDD" id="cd06352">
    <property type="entry name" value="PBP1_NPR_GC-like"/>
    <property type="match status" value="1"/>
</dbReference>
<dbReference type="FunFam" id="3.30.70.1230:FF:000023">
    <property type="entry name" value="Guanylate cyclase"/>
    <property type="match status" value="1"/>
</dbReference>
<dbReference type="FunFam" id="3.40.50.2300:FF:000447">
    <property type="entry name" value="Receptor-type guanylate cyclase gcy-19"/>
    <property type="match status" value="1"/>
</dbReference>
<dbReference type="FunFam" id="1.10.510.10:FF:001114">
    <property type="entry name" value="Receptor-type guanylate cyclase gcy-4"/>
    <property type="match status" value="1"/>
</dbReference>
<dbReference type="Gene3D" id="3.40.50.2300">
    <property type="match status" value="2"/>
</dbReference>
<dbReference type="Gene3D" id="6.10.250.780">
    <property type="match status" value="1"/>
</dbReference>
<dbReference type="Gene3D" id="3.30.70.1230">
    <property type="entry name" value="Nucleotide cyclase"/>
    <property type="match status" value="1"/>
</dbReference>
<dbReference type="Gene3D" id="1.10.510.10">
    <property type="entry name" value="Transferase(Phosphotransferase) domain 1"/>
    <property type="match status" value="1"/>
</dbReference>
<dbReference type="InterPro" id="IPR001054">
    <property type="entry name" value="A/G_cyclase"/>
</dbReference>
<dbReference type="InterPro" id="IPR018297">
    <property type="entry name" value="A/G_cyclase_CS"/>
</dbReference>
<dbReference type="InterPro" id="IPR001828">
    <property type="entry name" value="ANF_lig-bd_rcpt"/>
</dbReference>
<dbReference type="InterPro" id="IPR050401">
    <property type="entry name" value="Cyclic_nucleotide_synthase"/>
</dbReference>
<dbReference type="InterPro" id="IPR011009">
    <property type="entry name" value="Kinase-like_dom_sf"/>
</dbReference>
<dbReference type="InterPro" id="IPR029787">
    <property type="entry name" value="Nucleotide_cyclase"/>
</dbReference>
<dbReference type="InterPro" id="IPR028082">
    <property type="entry name" value="Peripla_BP_I"/>
</dbReference>
<dbReference type="InterPro" id="IPR000719">
    <property type="entry name" value="Prot_kinase_dom"/>
</dbReference>
<dbReference type="InterPro" id="IPR001245">
    <property type="entry name" value="Ser-Thr/Tyr_kinase_cat_dom"/>
</dbReference>
<dbReference type="PANTHER" id="PTHR11920">
    <property type="entry name" value="GUANYLYL CYCLASE"/>
    <property type="match status" value="1"/>
</dbReference>
<dbReference type="PANTHER" id="PTHR11920:SF68">
    <property type="entry name" value="RECEPTOR-TYPE GUANYLATE CYCLASE GCY-4"/>
    <property type="match status" value="1"/>
</dbReference>
<dbReference type="Pfam" id="PF01094">
    <property type="entry name" value="ANF_receptor"/>
    <property type="match status" value="1"/>
</dbReference>
<dbReference type="Pfam" id="PF00211">
    <property type="entry name" value="Guanylate_cyc"/>
    <property type="match status" value="1"/>
</dbReference>
<dbReference type="Pfam" id="PF07714">
    <property type="entry name" value="PK_Tyr_Ser-Thr"/>
    <property type="match status" value="1"/>
</dbReference>
<dbReference type="SMART" id="SM00044">
    <property type="entry name" value="CYCc"/>
    <property type="match status" value="1"/>
</dbReference>
<dbReference type="SUPFAM" id="SSF55073">
    <property type="entry name" value="Nucleotide cyclase"/>
    <property type="match status" value="1"/>
</dbReference>
<dbReference type="SUPFAM" id="SSF53822">
    <property type="entry name" value="Periplasmic binding protein-like I"/>
    <property type="match status" value="1"/>
</dbReference>
<dbReference type="SUPFAM" id="SSF56112">
    <property type="entry name" value="Protein kinase-like (PK-like)"/>
    <property type="match status" value="1"/>
</dbReference>
<dbReference type="PROSITE" id="PS00452">
    <property type="entry name" value="GUANYLATE_CYCLASE_1"/>
    <property type="match status" value="1"/>
</dbReference>
<dbReference type="PROSITE" id="PS50125">
    <property type="entry name" value="GUANYLATE_CYCLASE_2"/>
    <property type="match status" value="1"/>
</dbReference>
<dbReference type="PROSITE" id="PS50011">
    <property type="entry name" value="PROTEIN_KINASE_DOM"/>
    <property type="match status" value="1"/>
</dbReference>
<reference evidence="11" key="1">
    <citation type="journal article" date="2003" name="PLoS Biol.">
        <title>The genome sequence of Caenorhabditis briggsae: a platform for comparative genomics.</title>
        <authorList>
            <person name="Stein L.D."/>
            <person name="Bao Z."/>
            <person name="Blasiar D."/>
            <person name="Blumenthal T."/>
            <person name="Brent M.R."/>
            <person name="Chen N."/>
            <person name="Chinwalla A."/>
            <person name="Clarke L."/>
            <person name="Clee C."/>
            <person name="Coghlan A."/>
            <person name="Coulson A."/>
            <person name="D'Eustachio P."/>
            <person name="Fitch D.H.A."/>
            <person name="Fulton L.A."/>
            <person name="Fulton R.E."/>
            <person name="Griffiths-Jones S."/>
            <person name="Harris T.W."/>
            <person name="Hillier L.W."/>
            <person name="Kamath R."/>
            <person name="Kuwabara P.E."/>
            <person name="Mardis E.R."/>
            <person name="Marra M.A."/>
            <person name="Miner T.L."/>
            <person name="Minx P."/>
            <person name="Mullikin J.C."/>
            <person name="Plumb R.W."/>
            <person name="Rogers J."/>
            <person name="Schein J.E."/>
            <person name="Sohrmann M."/>
            <person name="Spieth J."/>
            <person name="Stajich J.E."/>
            <person name="Wei C."/>
            <person name="Willey D."/>
            <person name="Wilson R.K."/>
            <person name="Durbin R.M."/>
            <person name="Waterston R.H."/>
        </authorList>
    </citation>
    <scope>NUCLEOTIDE SEQUENCE [LARGE SCALE GENOMIC DNA]</scope>
    <source>
        <strain evidence="10 11">AF16</strain>
    </source>
</reference>
<reference evidence="9" key="2">
    <citation type="journal article" date="2006" name="Genetics">
        <title>Searching for neuronal left/right asymmetry: genomewide analysis of nematode receptor-type guanylyl cyclases.</title>
        <authorList>
            <person name="Ortiz C.O."/>
            <person name="Etchberger J.F."/>
            <person name="Posy S.L."/>
            <person name="Frokjaer-Jensen C."/>
            <person name="Lockery S."/>
            <person name="Honig B."/>
            <person name="Hobert O."/>
        </authorList>
    </citation>
    <scope>TISSUE SPECIFICITY</scope>
</reference>
<sequence length="1135" mass="128272">MTQLLRFLLILSIFCDFSHSQRPTIRVGIAAALKTQNGSIGWAYAGGAVPLALQYLKSHGFVKDFDFEFHVEYTECDLTETVRAGLDFMKTKNYDVIIGPPCATPLIAMGTLSTVYKKPVLGWGFVSESEFSDMERFPYLTSVLPSSMTLGTVTSALLELYGWDRIALVYFKNELNYCSGVIEDVETSLYDENYSQMVQVVIKEEVDQNNTENFVATLQMIKARARIIIFCAQTGAEKRFYMIQAGKQGMNTSEYVHVMLSMRSVGFGVQSAVGKKPLNSGLAPIWEAFQVAPDGLEDLAKSVASKMLVIDLSSDIRDKEFLQYMTKNIVYAIREPPLSCMAPECLAANATGMGAYARHLFDVFYMYGMALTNLNSTDPNIYGNVDLLVSKFTTPFEGMTGQVQLNSELSRLPLYQVYALNKEYDQISIMNISLINGTAKVSLAYQNESSDVWHFWGSTRPLDTPICGFLGKSCPIPFFDQYRLLIFVFVIVAGLLILAIFTCLTSMVRNQRAEQSRLNSEWQIHAIKLRIPEKKGRRLSTDSENSTVTKSSKGSSSKNFETSEFNENYEIQFLENDLVLTTAHQVQELSNLDKMRLVKLRKLDHENLNKFIGLSIDGSRYLAVWKMCTRGSIQDIMSRGNFSMDYFFMFCMIRDIAEGLNFLHKSFLRLHGNLRSATCLVNDSWQVKLAEFGLEFLQDDEERPTQKRLLWAAPEVLRGSLTVSQMDPSADVYSFAIVASEILTKKEAWDLHKRKEGYEGKRGNSKIEIIYNVKKGGPHPFRPTLLTDSDVNKSLLALVKDCWSENPEARPNTENICKIILDMTPRTKDNLMDHVFSMLEEYTQTLEVEVDERTKELVLEKKKSDILLGRMLPKQVAERLKAGQAVEPESFDLVTVFFSDLVKFTELANKCSPFQVVNLLNEVFSNFDAIIEKHDVYKVESIGDGFLCVSGLPNRNGVEHIRQIVEMALGFLEFCDKFRIPHLPRERVELRVGVNSGSCVAGVVGLSMPRYCLFGDTVNTASRMESNGKASLIHMSEIAHAFLVDHFPYQYETNSRGEVIIKGKGVMETFWLLGRISMSNRSTPPVAQLKQLPQKCSSFTDTGTIRSVSPYIENASDSEDEELRRVMRREMMRVS</sequence>